<evidence type="ECO:0000255" key="1"/>
<evidence type="ECO:0000269" key="2">
    <source>
    </source>
</evidence>
<evidence type="ECO:0000305" key="3"/>
<evidence type="ECO:0000312" key="4">
    <source>
        <dbReference type="EMBL" id="BAC59719.1"/>
    </source>
</evidence>
<proteinExistence type="evidence at protein level"/>
<accession>Q87PP5</accession>
<sequence length="562" mass="61407">MIKFASFLKFRVQINGGRYWSSSPLRSVSNYVKFVFMDNAFKKYSIDTTDYQVGQDNVQKWGFDIHNPVFGISAGLVVFCLISLLLVEPVTARDALNGIKNGIIEQFDAFFMWSTNFFLLFAVGLLFSPLGKIRLGGKEATPDHSTVSWLSMLFAAGMGIGLLFWSVAEPTAYFTDWWGTPLNAEAYSADAKSLAMGATMFHWGVHGWSIYALVALALAFFAFNKGLPLSLRAAFYPIFGDRAWGWLGHVIDILAVLSTLFGLATSLGLGAQQATSGINHVFGLNGGIGTQMVVIAFVTFIAVLSVVRGIDGGVKLLSNVNMIVAFALLIFITFITFDTAMGSLVDTTMAYIQNIIPLSNPHGREDETWMHGWTVFYWAWWVSWSPFVGMFIARVSKGRTVREFLFAVIVIPTLVTLVWMSVFGGIALDQVVNKVGELGANGLTDISLTLFHVYDVLPYSSVISILSIVLILVFFITSSDSGSLVIDSITAGGKIDAPVPQRIFWACIEGSIAAVMLWVGGKEALQALQSGVVATGLPFTFVLLLMCVSLVKGLRTELSAYR</sequence>
<gene>
    <name evidence="4" type="ordered locus">VP1456</name>
</gene>
<feature type="chain" id="PRO_0000441715" description="Glycine betaine/proline/choline/ectoine transporter VP1456">
    <location>
        <begin position="1"/>
        <end position="562"/>
    </location>
</feature>
<feature type="transmembrane region" description="Helical" evidence="1">
    <location>
        <begin position="68"/>
        <end position="88"/>
    </location>
</feature>
<feature type="transmembrane region" description="Helical" evidence="1">
    <location>
        <begin position="110"/>
        <end position="130"/>
    </location>
</feature>
<feature type="transmembrane region" description="Helical" evidence="1">
    <location>
        <begin position="147"/>
        <end position="167"/>
    </location>
</feature>
<feature type="transmembrane region" description="Helical" evidence="1">
    <location>
        <begin position="203"/>
        <end position="223"/>
    </location>
</feature>
<feature type="transmembrane region" description="Helical" evidence="1">
    <location>
        <begin position="243"/>
        <end position="263"/>
    </location>
</feature>
<feature type="transmembrane region" description="Helical" evidence="1">
    <location>
        <begin position="287"/>
        <end position="307"/>
    </location>
</feature>
<feature type="transmembrane region" description="Helical" evidence="1">
    <location>
        <begin position="322"/>
        <end position="342"/>
    </location>
</feature>
<feature type="transmembrane region" description="Helical" evidence="1">
    <location>
        <begin position="373"/>
        <end position="393"/>
    </location>
</feature>
<feature type="transmembrane region" description="Helical" evidence="1">
    <location>
        <begin position="404"/>
        <end position="424"/>
    </location>
</feature>
<feature type="transmembrane region" description="Helical" evidence="1">
    <location>
        <begin position="456"/>
        <end position="476"/>
    </location>
</feature>
<feature type="transmembrane region" description="Helical" evidence="1">
    <location>
        <begin position="503"/>
        <end position="523"/>
    </location>
</feature>
<feature type="transmembrane region" description="Helical" evidence="1">
    <location>
        <begin position="531"/>
        <end position="551"/>
    </location>
</feature>
<comment type="function">
    <text evidence="2">Involved in the uptake of osmoprotectants. Can transport glycine betaine, proline, choline and ectoine.</text>
</comment>
<comment type="subcellular location">
    <subcellularLocation>
        <location evidence="3">Cell inner membrane</location>
        <topology evidence="1">Multi-pass membrane protein</topology>
    </subcellularLocation>
</comment>
<comment type="induction">
    <text evidence="2">Induced by NaCl upshock.</text>
</comment>
<comment type="similarity">
    <text evidence="3">Belongs to the BCCT transporter (TC 2.A.15) family.</text>
</comment>
<organism>
    <name type="scientific">Vibrio parahaemolyticus serotype O3:K6 (strain RIMD 2210633)</name>
    <dbReference type="NCBI Taxonomy" id="223926"/>
    <lineage>
        <taxon>Bacteria</taxon>
        <taxon>Pseudomonadati</taxon>
        <taxon>Pseudomonadota</taxon>
        <taxon>Gammaproteobacteria</taxon>
        <taxon>Vibrionales</taxon>
        <taxon>Vibrionaceae</taxon>
        <taxon>Vibrio</taxon>
    </lineage>
</organism>
<protein>
    <recommendedName>
        <fullName evidence="3">Glycine betaine/proline/choline/ectoine transporter VP1456</fullName>
    </recommendedName>
</protein>
<keyword id="KW-0029">Amino-acid transport</keyword>
<keyword id="KW-0997">Cell inner membrane</keyword>
<keyword id="KW-1003">Cell membrane</keyword>
<keyword id="KW-0472">Membrane</keyword>
<keyword id="KW-0346">Stress response</keyword>
<keyword id="KW-0812">Transmembrane</keyword>
<keyword id="KW-1133">Transmembrane helix</keyword>
<keyword id="KW-0813">Transport</keyword>
<reference key="1">
    <citation type="journal article" date="2003" name="Lancet">
        <title>Genome sequence of Vibrio parahaemolyticus: a pathogenic mechanism distinct from that of V. cholerae.</title>
        <authorList>
            <person name="Makino K."/>
            <person name="Oshima K."/>
            <person name="Kurokawa K."/>
            <person name="Yokoyama K."/>
            <person name="Uda T."/>
            <person name="Tagomori K."/>
            <person name="Iijima Y."/>
            <person name="Najima M."/>
            <person name="Nakano M."/>
            <person name="Yamashita A."/>
            <person name="Kubota Y."/>
            <person name="Kimura S."/>
            <person name="Yasunaga T."/>
            <person name="Honda T."/>
            <person name="Shinagawa H."/>
            <person name="Hattori M."/>
            <person name="Iida T."/>
        </authorList>
    </citation>
    <scope>NUCLEOTIDE SEQUENCE [LARGE SCALE GENOMIC DNA]</scope>
    <source>
        <strain>RIMD 2210633</strain>
    </source>
</reference>
<reference key="2">
    <citation type="journal article" date="2015" name="Appl. Environ. Microbiol.">
        <title>Deciphering the role of multiple betaine-carnitine-choline transporters in the halophile Vibrio parahaemolyticus.</title>
        <authorList>
            <person name="Ongagna-Yhombi S.Y."/>
            <person name="McDonald N.D."/>
            <person name="Boyd E.F."/>
        </authorList>
    </citation>
    <scope>FUNCTION AS A TRANSPORTER</scope>
    <scope>INDUCTION</scope>
    <source>
        <strain>RIMD 2210633</strain>
    </source>
</reference>
<name>BCCT1_VIBPA</name>
<dbReference type="EMBL" id="BA000031">
    <property type="protein sequence ID" value="BAC59719.1"/>
    <property type="molecule type" value="Genomic_DNA"/>
</dbReference>
<dbReference type="RefSeq" id="NP_797835.1">
    <property type="nucleotide sequence ID" value="NC_004603.1"/>
</dbReference>
<dbReference type="SMR" id="Q87PP5"/>
<dbReference type="KEGG" id="vpa:VP1456"/>
<dbReference type="PATRIC" id="fig|223926.6.peg.1392"/>
<dbReference type="eggNOG" id="COG1292">
    <property type="taxonomic scope" value="Bacteria"/>
</dbReference>
<dbReference type="HOGENOM" id="CLU_010118_5_0_6"/>
<dbReference type="Proteomes" id="UP000002493">
    <property type="component" value="Chromosome 1"/>
</dbReference>
<dbReference type="GO" id="GO:0005886">
    <property type="term" value="C:plasma membrane"/>
    <property type="evidence" value="ECO:0007669"/>
    <property type="project" value="UniProtKB-SubCell"/>
</dbReference>
<dbReference type="GO" id="GO:0022857">
    <property type="term" value="F:transmembrane transporter activity"/>
    <property type="evidence" value="ECO:0007669"/>
    <property type="project" value="InterPro"/>
</dbReference>
<dbReference type="GO" id="GO:0006865">
    <property type="term" value="P:amino acid transport"/>
    <property type="evidence" value="ECO:0007669"/>
    <property type="project" value="UniProtKB-KW"/>
</dbReference>
<dbReference type="InterPro" id="IPR018093">
    <property type="entry name" value="BCCT_CS"/>
</dbReference>
<dbReference type="InterPro" id="IPR000060">
    <property type="entry name" value="BCCT_transptr"/>
</dbReference>
<dbReference type="NCBIfam" id="TIGR00842">
    <property type="entry name" value="bcct"/>
    <property type="match status" value="1"/>
</dbReference>
<dbReference type="PANTHER" id="PTHR30047:SF7">
    <property type="entry name" value="HIGH-AFFINITY CHOLINE TRANSPORT PROTEIN"/>
    <property type="match status" value="1"/>
</dbReference>
<dbReference type="PANTHER" id="PTHR30047">
    <property type="entry name" value="HIGH-AFFINITY CHOLINE TRANSPORT PROTEIN-RELATED"/>
    <property type="match status" value="1"/>
</dbReference>
<dbReference type="Pfam" id="PF02028">
    <property type="entry name" value="BCCT"/>
    <property type="match status" value="1"/>
</dbReference>
<dbReference type="PROSITE" id="PS01303">
    <property type="entry name" value="BCCT"/>
    <property type="match status" value="1"/>
</dbReference>